<name>RGLB_NEOFI</name>
<gene>
    <name type="primary">rglB</name>
    <name type="ORF">NFIA_008140</name>
</gene>
<accession>A1D144</accession>
<dbReference type="EC" id="4.2.2.23"/>
<dbReference type="EMBL" id="DS027688">
    <property type="protein sequence ID" value="EAW22137.1"/>
    <property type="molecule type" value="Genomic_DNA"/>
</dbReference>
<dbReference type="RefSeq" id="XP_001264034.1">
    <property type="nucleotide sequence ID" value="XM_001264033.1"/>
</dbReference>
<dbReference type="SMR" id="A1D144"/>
<dbReference type="STRING" id="331117.A1D144"/>
<dbReference type="GlyCosmos" id="A1D144">
    <property type="glycosylation" value="10 sites, No reported glycans"/>
</dbReference>
<dbReference type="EnsemblFungi" id="EAW22137">
    <property type="protein sequence ID" value="EAW22137"/>
    <property type="gene ID" value="NFIA_008140"/>
</dbReference>
<dbReference type="GeneID" id="4591405"/>
<dbReference type="KEGG" id="nfi:NFIA_008140"/>
<dbReference type="VEuPathDB" id="FungiDB:NFIA_008140"/>
<dbReference type="eggNOG" id="ENOG502QQM5">
    <property type="taxonomic scope" value="Eukaryota"/>
</dbReference>
<dbReference type="HOGENOM" id="CLU_016624_0_0_1"/>
<dbReference type="OMA" id="ATWYLGN"/>
<dbReference type="OrthoDB" id="2130367at2759"/>
<dbReference type="Proteomes" id="UP000006702">
    <property type="component" value="Unassembled WGS sequence"/>
</dbReference>
<dbReference type="GO" id="GO:0005576">
    <property type="term" value="C:extracellular region"/>
    <property type="evidence" value="ECO:0007669"/>
    <property type="project" value="UniProtKB-SubCell"/>
</dbReference>
<dbReference type="GO" id="GO:0030246">
    <property type="term" value="F:carbohydrate binding"/>
    <property type="evidence" value="ECO:0007669"/>
    <property type="project" value="InterPro"/>
</dbReference>
<dbReference type="GO" id="GO:0102210">
    <property type="term" value="F:rhamnogalacturonan endolyase activity"/>
    <property type="evidence" value="ECO:0007669"/>
    <property type="project" value="UniProtKB-EC"/>
</dbReference>
<dbReference type="GO" id="GO:0071555">
    <property type="term" value="P:cell wall organization"/>
    <property type="evidence" value="ECO:0007669"/>
    <property type="project" value="UniProtKB-KW"/>
</dbReference>
<dbReference type="GO" id="GO:0000272">
    <property type="term" value="P:polysaccharide catabolic process"/>
    <property type="evidence" value="ECO:0007669"/>
    <property type="project" value="UniProtKB-KW"/>
</dbReference>
<dbReference type="CDD" id="cd10317">
    <property type="entry name" value="RGL4_C"/>
    <property type="match status" value="1"/>
</dbReference>
<dbReference type="CDD" id="cd10316">
    <property type="entry name" value="RGL4_M"/>
    <property type="match status" value="1"/>
</dbReference>
<dbReference type="CDD" id="cd10320">
    <property type="entry name" value="RGL4_N"/>
    <property type="match status" value="1"/>
</dbReference>
<dbReference type="Gene3D" id="2.70.98.10">
    <property type="match status" value="1"/>
</dbReference>
<dbReference type="Gene3D" id="2.60.40.1120">
    <property type="entry name" value="Carboxypeptidase-like, regulatory domain"/>
    <property type="match status" value="1"/>
</dbReference>
<dbReference type="Gene3D" id="2.60.120.260">
    <property type="entry name" value="Galactose-binding domain-like"/>
    <property type="match status" value="1"/>
</dbReference>
<dbReference type="InterPro" id="IPR013784">
    <property type="entry name" value="Carb-bd-like_fold"/>
</dbReference>
<dbReference type="InterPro" id="IPR011013">
    <property type="entry name" value="Gal_mutarotase_sf_dom"/>
</dbReference>
<dbReference type="InterPro" id="IPR008979">
    <property type="entry name" value="Galactose-bd-like_sf"/>
</dbReference>
<dbReference type="InterPro" id="IPR014718">
    <property type="entry name" value="GH-type_carb-bd"/>
</dbReference>
<dbReference type="InterPro" id="IPR051850">
    <property type="entry name" value="Polysacch_Lyase_4"/>
</dbReference>
<dbReference type="InterPro" id="IPR029413">
    <property type="entry name" value="RG-lyase_II"/>
</dbReference>
<dbReference type="InterPro" id="IPR029411">
    <property type="entry name" value="RG-lyase_III"/>
</dbReference>
<dbReference type="PANTHER" id="PTHR32018:SF9">
    <property type="entry name" value="RHAMNOGALACTURONATE LYASE B"/>
    <property type="match status" value="1"/>
</dbReference>
<dbReference type="PANTHER" id="PTHR32018">
    <property type="entry name" value="RHAMNOGALACTURONATE LYASE FAMILY PROTEIN"/>
    <property type="match status" value="1"/>
</dbReference>
<dbReference type="Pfam" id="PF14683">
    <property type="entry name" value="CBM-like"/>
    <property type="match status" value="1"/>
</dbReference>
<dbReference type="Pfam" id="PF14686">
    <property type="entry name" value="fn3_3"/>
    <property type="match status" value="1"/>
</dbReference>
<dbReference type="SUPFAM" id="SSF74650">
    <property type="entry name" value="Galactose mutarotase-like"/>
    <property type="match status" value="1"/>
</dbReference>
<dbReference type="SUPFAM" id="SSF49785">
    <property type="entry name" value="Galactose-binding domain-like"/>
    <property type="match status" value="1"/>
</dbReference>
<dbReference type="SUPFAM" id="SSF49452">
    <property type="entry name" value="Starch-binding domain-like"/>
    <property type="match status" value="1"/>
</dbReference>
<protein>
    <recommendedName>
        <fullName>Probable rhamnogalacturonate lyase B</fullName>
        <ecNumber>4.2.2.23</ecNumber>
    </recommendedName>
</protein>
<sequence>MRFAIPLGAACAWAGVALAALQIAEDDSTITLNNDRFKAVWSKSKGSVVDMFLDGQDLLGPQSGSTGIGPYLDCYCVPSGFYTAGATNPRMQYVEGTDSTGTNYAGVILNDTYTPTGQQFQQYWFLRDGETGLHMFSRLAYYNETTPFLRNLQEFRTLFRPNTQLWTHLTSSELQTAPLPSKNAVSKQVVVQDATWRFNNTPDDAYYTQFSEYFTKYTFSNQWRDNDVHGLYGDGTNSNGSTYGAWLVMNTKGPLHSDLTVDGIVYNYIVSNHHGEGTPNITNGFDRTFGPQFYLFNGGKGSTSSLQDLRSEAAKLADPSWNAEFYDSIAKHVVGYVPSSKRGSVDGRVKLPKGATNPIAILTVDGQYFQDNSVVPSSYQYWTDIDTSGKFRIDRVVEGKYRLTVYADGIFGDFVRDGVTVKAGKTTTVKEKWDAESAGKEVWRLGTPDKSSGEFRHGVARDPTHPLHPPEYLIYWGAYDWQSDLPKGIDYRIGSSDPATDFNTVHWSVFGPTPDNPDVEYNTTHDWKINFSLTKKQLRNSKKATLTIQLAGAKTASGNTDVYNASEPYINLSHESYINDQKEPLSFVIGFNQSSSCIVRSAVSCYQVRSRMEFPADWLKVGENTLTLHLPYNATDTETAILPATVYVQYDALRLELD</sequence>
<evidence type="ECO:0000250" key="1"/>
<evidence type="ECO:0000255" key="2"/>
<evidence type="ECO:0000305" key="3"/>
<comment type="function">
    <text evidence="1">Pectinolytic enzymes consist of four classes of enzymes: pectin lyase, polygalacturonase, pectin methylesterase and rhamnogalacturonase. Degrades the rhamnogalacturonan I (RG-I) backbone of pectin (By similarity).</text>
</comment>
<comment type="catalytic activity">
    <reaction>
        <text>Endotype eliminative cleavage of L-alpha-rhamnopyranosyl-(1-&gt;4)-alpha-D-galactopyranosyluronic acid bonds of rhamnogalacturonan I domains in ramified hairy regions of pectin leaving L-rhamnopyranose at the reducing end and 4-deoxy-4,5-unsaturated D-galactopyranosyluronic acid at the non-reducing end.</text>
        <dbReference type="EC" id="4.2.2.23"/>
    </reaction>
</comment>
<comment type="subcellular location">
    <subcellularLocation>
        <location evidence="1">Secreted</location>
    </subcellularLocation>
</comment>
<comment type="similarity">
    <text evidence="3">Belongs to the polysaccharide lyase 4 family.</text>
</comment>
<proteinExistence type="inferred from homology"/>
<organism>
    <name type="scientific">Neosartorya fischeri (strain ATCC 1020 / DSM 3700 / CBS 544.65 / FGSC A1164 / JCM 1740 / NRRL 181 / WB 181)</name>
    <name type="common">Aspergillus fischerianus</name>
    <dbReference type="NCBI Taxonomy" id="331117"/>
    <lineage>
        <taxon>Eukaryota</taxon>
        <taxon>Fungi</taxon>
        <taxon>Dikarya</taxon>
        <taxon>Ascomycota</taxon>
        <taxon>Pezizomycotina</taxon>
        <taxon>Eurotiomycetes</taxon>
        <taxon>Eurotiomycetidae</taxon>
        <taxon>Eurotiales</taxon>
        <taxon>Aspergillaceae</taxon>
        <taxon>Aspergillus</taxon>
        <taxon>Aspergillus subgen. Fumigati</taxon>
    </lineage>
</organism>
<reference key="1">
    <citation type="journal article" date="2008" name="PLoS Genet.">
        <title>Genomic islands in the pathogenic filamentous fungus Aspergillus fumigatus.</title>
        <authorList>
            <person name="Fedorova N.D."/>
            <person name="Khaldi N."/>
            <person name="Joardar V.S."/>
            <person name="Maiti R."/>
            <person name="Amedeo P."/>
            <person name="Anderson M.J."/>
            <person name="Crabtree J."/>
            <person name="Silva J.C."/>
            <person name="Badger J.H."/>
            <person name="Albarraq A."/>
            <person name="Angiuoli S."/>
            <person name="Bussey H."/>
            <person name="Bowyer P."/>
            <person name="Cotty P.J."/>
            <person name="Dyer P.S."/>
            <person name="Egan A."/>
            <person name="Galens K."/>
            <person name="Fraser-Liggett C.M."/>
            <person name="Haas B.J."/>
            <person name="Inman J.M."/>
            <person name="Kent R."/>
            <person name="Lemieux S."/>
            <person name="Malavazi I."/>
            <person name="Orvis J."/>
            <person name="Roemer T."/>
            <person name="Ronning C.M."/>
            <person name="Sundaram J.P."/>
            <person name="Sutton G."/>
            <person name="Turner G."/>
            <person name="Venter J.C."/>
            <person name="White O.R."/>
            <person name="Whitty B.R."/>
            <person name="Youngman P."/>
            <person name="Wolfe K.H."/>
            <person name="Goldman G.H."/>
            <person name="Wortman J.R."/>
            <person name="Jiang B."/>
            <person name="Denning D.W."/>
            <person name="Nierman W.C."/>
        </authorList>
    </citation>
    <scope>NUCLEOTIDE SEQUENCE [LARGE SCALE GENOMIC DNA]</scope>
    <source>
        <strain>ATCC 1020 / DSM 3700 / CBS 544.65 / FGSC A1164 / JCM 1740 / NRRL 181 / WB 181</strain>
    </source>
</reference>
<feature type="signal peptide" evidence="2">
    <location>
        <begin position="1"/>
        <end position="19"/>
    </location>
</feature>
<feature type="chain" id="PRO_0000394379" description="Probable rhamnogalacturonate lyase B">
    <location>
        <begin position="20"/>
        <end position="658"/>
    </location>
</feature>
<feature type="glycosylation site" description="N-linked (GlcNAc...) asparagine" evidence="2">
    <location>
        <position position="110"/>
    </location>
</feature>
<feature type="glycosylation site" description="N-linked (GlcNAc...) asparagine" evidence="2">
    <location>
        <position position="143"/>
    </location>
</feature>
<feature type="glycosylation site" description="N-linked (GlcNAc...) asparagine" evidence="2">
    <location>
        <position position="239"/>
    </location>
</feature>
<feature type="glycosylation site" description="N-linked (GlcNAc...) asparagine" evidence="2">
    <location>
        <position position="280"/>
    </location>
</feature>
<feature type="glycosylation site" description="N-linked (GlcNAc...) asparagine" evidence="2">
    <location>
        <position position="522"/>
    </location>
</feature>
<feature type="glycosylation site" description="N-linked (GlcNAc...) asparagine" evidence="2">
    <location>
        <position position="530"/>
    </location>
</feature>
<feature type="glycosylation site" description="N-linked (GlcNAc...) asparagine" evidence="2">
    <location>
        <position position="564"/>
    </location>
</feature>
<feature type="glycosylation site" description="N-linked (GlcNAc...) asparagine" evidence="2">
    <location>
        <position position="571"/>
    </location>
</feature>
<feature type="glycosylation site" description="N-linked (GlcNAc...) asparagine" evidence="2">
    <location>
        <position position="592"/>
    </location>
</feature>
<feature type="glycosylation site" description="N-linked (GlcNAc...) asparagine" evidence="2">
    <location>
        <position position="633"/>
    </location>
</feature>
<keyword id="KW-0119">Carbohydrate metabolism</keyword>
<keyword id="KW-0961">Cell wall biogenesis/degradation</keyword>
<keyword id="KW-0325">Glycoprotein</keyword>
<keyword id="KW-0456">Lyase</keyword>
<keyword id="KW-0624">Polysaccharide degradation</keyword>
<keyword id="KW-1185">Reference proteome</keyword>
<keyword id="KW-0964">Secreted</keyword>
<keyword id="KW-0732">Signal</keyword>